<gene>
    <name type="primary">PAT</name>
    <name type="synonym">AAT</name>
    <name type="synonym">MEE17</name>
    <name type="ordered locus">At2g22250</name>
    <name type="ORF">T26C19.9</name>
</gene>
<proteinExistence type="evidence at protein level"/>
<dbReference type="EC" id="2.6.1.1"/>
<dbReference type="EC" id="2.6.1.78"/>
<dbReference type="EC" id="2.6.1.79"/>
<dbReference type="EMBL" id="HM638413">
    <property type="protein sequence ID" value="ADM67558.1"/>
    <property type="molecule type" value="mRNA"/>
</dbReference>
<dbReference type="EMBL" id="AC007168">
    <property type="protein sequence ID" value="AAD23617.2"/>
    <property type="molecule type" value="Genomic_DNA"/>
</dbReference>
<dbReference type="EMBL" id="CP002685">
    <property type="protein sequence ID" value="AEC07283.1"/>
    <property type="molecule type" value="Genomic_DNA"/>
</dbReference>
<dbReference type="EMBL" id="CP002685">
    <property type="protein sequence ID" value="AEC07284.1"/>
    <property type="molecule type" value="Genomic_DNA"/>
</dbReference>
<dbReference type="EMBL" id="CP002685">
    <property type="protein sequence ID" value="AEC07285.1"/>
    <property type="molecule type" value="Genomic_DNA"/>
</dbReference>
<dbReference type="EMBL" id="AY064152">
    <property type="protein sequence ID" value="AAL36058.1"/>
    <property type="molecule type" value="mRNA"/>
</dbReference>
<dbReference type="EMBL" id="AY124811">
    <property type="protein sequence ID" value="AAM70520.1"/>
    <property type="molecule type" value="mRNA"/>
</dbReference>
<dbReference type="EMBL" id="AY084599">
    <property type="protein sequence ID" value="AAM61164.1"/>
    <property type="molecule type" value="mRNA"/>
</dbReference>
<dbReference type="EMBL" id="BX820081">
    <property type="status" value="NOT_ANNOTATED_CDS"/>
    <property type="molecule type" value="mRNA"/>
</dbReference>
<dbReference type="PIR" id="E84610">
    <property type="entry name" value="E84610"/>
</dbReference>
<dbReference type="RefSeq" id="NP_001031394.1">
    <molecule id="Q9SIE1-1"/>
    <property type="nucleotide sequence ID" value="NM_001036317.1"/>
</dbReference>
<dbReference type="RefSeq" id="NP_565529.1">
    <molecule id="Q9SIE1-1"/>
    <property type="nucleotide sequence ID" value="NM_127791.3"/>
</dbReference>
<dbReference type="RefSeq" id="NP_850022.1">
    <molecule id="Q9SIE1-2"/>
    <property type="nucleotide sequence ID" value="NM_179691.4"/>
</dbReference>
<dbReference type="PDB" id="5WMH">
    <property type="method" value="X-ray"/>
    <property type="resolution" value="3.00 A"/>
    <property type="chains" value="A/B/C/D/E/F=1-475"/>
</dbReference>
<dbReference type="PDB" id="5WMI">
    <property type="method" value="X-ray"/>
    <property type="resolution" value="2.00 A"/>
    <property type="chains" value="A=1-475"/>
</dbReference>
<dbReference type="PDB" id="5WMK">
    <property type="method" value="X-ray"/>
    <property type="resolution" value="1.40 A"/>
    <property type="chains" value="A=1-475"/>
</dbReference>
<dbReference type="PDB" id="5WML">
    <property type="method" value="X-ray"/>
    <property type="resolution" value="2.10 A"/>
    <property type="chains" value="A/B=1-475"/>
</dbReference>
<dbReference type="PDB" id="6F5V">
    <property type="method" value="X-ray"/>
    <property type="resolution" value="1.70 A"/>
    <property type="chains" value="A/B/C/D=1-475"/>
</dbReference>
<dbReference type="PDBsum" id="5WMH"/>
<dbReference type="PDBsum" id="5WMI"/>
<dbReference type="PDBsum" id="5WMK"/>
<dbReference type="PDBsum" id="5WML"/>
<dbReference type="PDBsum" id="6F5V"/>
<dbReference type="SMR" id="Q9SIE1"/>
<dbReference type="BioGRID" id="2111">
    <property type="interactions" value="2"/>
</dbReference>
<dbReference type="FunCoup" id="Q9SIE1">
    <property type="interactions" value="952"/>
</dbReference>
<dbReference type="IntAct" id="Q9SIE1">
    <property type="interactions" value="1"/>
</dbReference>
<dbReference type="STRING" id="3702.Q9SIE1"/>
<dbReference type="iPTMnet" id="Q9SIE1"/>
<dbReference type="PaxDb" id="3702-AT2G22250.2"/>
<dbReference type="ProteomicsDB" id="248639">
    <molecule id="Q9SIE1-1"/>
</dbReference>
<dbReference type="EnsemblPlants" id="AT2G22250.1">
    <molecule id="Q9SIE1-2"/>
    <property type="protein sequence ID" value="AT2G22250.1"/>
    <property type="gene ID" value="AT2G22250"/>
</dbReference>
<dbReference type="EnsemblPlants" id="AT2G22250.2">
    <molecule id="Q9SIE1-1"/>
    <property type="protein sequence ID" value="AT2G22250.2"/>
    <property type="gene ID" value="AT2G22250"/>
</dbReference>
<dbReference type="EnsemblPlants" id="AT2G22250.3">
    <molecule id="Q9SIE1-1"/>
    <property type="protein sequence ID" value="AT2G22250.3"/>
    <property type="gene ID" value="AT2G22250"/>
</dbReference>
<dbReference type="GeneID" id="816758"/>
<dbReference type="Gramene" id="AT2G22250.1">
    <molecule id="Q9SIE1-2"/>
    <property type="protein sequence ID" value="AT2G22250.1"/>
    <property type="gene ID" value="AT2G22250"/>
</dbReference>
<dbReference type="Gramene" id="AT2G22250.2">
    <molecule id="Q9SIE1-1"/>
    <property type="protein sequence ID" value="AT2G22250.2"/>
    <property type="gene ID" value="AT2G22250"/>
</dbReference>
<dbReference type="Gramene" id="AT2G22250.3">
    <molecule id="Q9SIE1-1"/>
    <property type="protein sequence ID" value="AT2G22250.3"/>
    <property type="gene ID" value="AT2G22250"/>
</dbReference>
<dbReference type="KEGG" id="ath:AT2G22250"/>
<dbReference type="Araport" id="AT2G22250"/>
<dbReference type="TAIR" id="AT2G22250">
    <property type="gene designation" value="AAT"/>
</dbReference>
<dbReference type="eggNOG" id="KOG0257">
    <property type="taxonomic scope" value="Eukaryota"/>
</dbReference>
<dbReference type="InParanoid" id="Q9SIE1"/>
<dbReference type="OrthoDB" id="2414662at2759"/>
<dbReference type="PhylomeDB" id="Q9SIE1"/>
<dbReference type="BioCyc" id="ARA:AT2G22250-MONOMER"/>
<dbReference type="BRENDA" id="2.6.1.1">
    <property type="organism ID" value="399"/>
</dbReference>
<dbReference type="BRENDA" id="2.6.1.78">
    <property type="organism ID" value="399"/>
</dbReference>
<dbReference type="BRENDA" id="2.6.1.79">
    <property type="organism ID" value="399"/>
</dbReference>
<dbReference type="SABIO-RK" id="Q9SIE1"/>
<dbReference type="UniPathway" id="UPA00121">
    <property type="reaction ID" value="UER00342"/>
</dbReference>
<dbReference type="UniPathway" id="UPA00121">
    <property type="reaction ID" value="UER00343"/>
</dbReference>
<dbReference type="PRO" id="PR:Q9SIE1"/>
<dbReference type="Proteomes" id="UP000006548">
    <property type="component" value="Chromosome 2"/>
</dbReference>
<dbReference type="ExpressionAtlas" id="Q9SIE1">
    <property type="expression patterns" value="baseline and differential"/>
</dbReference>
<dbReference type="GO" id="GO:0009507">
    <property type="term" value="C:chloroplast"/>
    <property type="evidence" value="ECO:0007005"/>
    <property type="project" value="TAIR"/>
</dbReference>
<dbReference type="GO" id="GO:0009570">
    <property type="term" value="C:chloroplast stroma"/>
    <property type="evidence" value="ECO:0007005"/>
    <property type="project" value="TAIR"/>
</dbReference>
<dbReference type="GO" id="GO:0033853">
    <property type="term" value="F:aspartate-prephenate aminotransferase activity"/>
    <property type="evidence" value="ECO:0000314"/>
    <property type="project" value="UniProtKB"/>
</dbReference>
<dbReference type="GO" id="GO:0033854">
    <property type="term" value="F:glutamate-prephenate aminotransferase activity"/>
    <property type="evidence" value="ECO:0000314"/>
    <property type="project" value="UniProtKB"/>
</dbReference>
<dbReference type="GO" id="GO:0004069">
    <property type="term" value="F:L-aspartate:2-oxoglutarate aminotransferase activity"/>
    <property type="evidence" value="ECO:0000314"/>
    <property type="project" value="UniProtKB"/>
</dbReference>
<dbReference type="GO" id="GO:0030170">
    <property type="term" value="F:pyridoxal phosphate binding"/>
    <property type="evidence" value="ECO:0007669"/>
    <property type="project" value="InterPro"/>
</dbReference>
<dbReference type="GO" id="GO:0009095">
    <property type="term" value="P:aromatic amino acid family biosynthetic process, prephenate pathway"/>
    <property type="evidence" value="ECO:0000314"/>
    <property type="project" value="UniProtKB"/>
</dbReference>
<dbReference type="GO" id="GO:0009793">
    <property type="term" value="P:embryo development ending in seed dormancy"/>
    <property type="evidence" value="ECO:0000315"/>
    <property type="project" value="TAIR"/>
</dbReference>
<dbReference type="GO" id="GO:0009094">
    <property type="term" value="P:L-phenylalanine biosynthetic process"/>
    <property type="evidence" value="ECO:0007669"/>
    <property type="project" value="UniProtKB-UniPathway"/>
</dbReference>
<dbReference type="CDD" id="cd00609">
    <property type="entry name" value="AAT_like"/>
    <property type="match status" value="1"/>
</dbReference>
<dbReference type="FunFam" id="3.40.640.10:FF:000033">
    <property type="entry name" value="Aspartate aminotransferase"/>
    <property type="match status" value="1"/>
</dbReference>
<dbReference type="Gene3D" id="3.90.1150.10">
    <property type="entry name" value="Aspartate Aminotransferase, domain 1"/>
    <property type="match status" value="1"/>
</dbReference>
<dbReference type="Gene3D" id="3.40.640.10">
    <property type="entry name" value="Type I PLP-dependent aspartate aminotransferase-like (Major domain)"/>
    <property type="match status" value="1"/>
</dbReference>
<dbReference type="InterPro" id="IPR004839">
    <property type="entry name" value="Aminotransferase_I/II_large"/>
</dbReference>
<dbReference type="InterPro" id="IPR050596">
    <property type="entry name" value="AspAT/PAT-like"/>
</dbReference>
<dbReference type="InterPro" id="IPR004838">
    <property type="entry name" value="NHTrfase_class1_PyrdxlP-BS"/>
</dbReference>
<dbReference type="InterPro" id="IPR015424">
    <property type="entry name" value="PyrdxlP-dep_Trfase"/>
</dbReference>
<dbReference type="InterPro" id="IPR015421">
    <property type="entry name" value="PyrdxlP-dep_Trfase_major"/>
</dbReference>
<dbReference type="InterPro" id="IPR015422">
    <property type="entry name" value="PyrdxlP-dep_Trfase_small"/>
</dbReference>
<dbReference type="PANTHER" id="PTHR46383">
    <property type="entry name" value="ASPARTATE AMINOTRANSFERASE"/>
    <property type="match status" value="1"/>
</dbReference>
<dbReference type="PANTHER" id="PTHR46383:SF1">
    <property type="entry name" value="ASPARTATE AMINOTRANSFERASE"/>
    <property type="match status" value="1"/>
</dbReference>
<dbReference type="Pfam" id="PF00155">
    <property type="entry name" value="Aminotran_1_2"/>
    <property type="match status" value="1"/>
</dbReference>
<dbReference type="SUPFAM" id="SSF53383">
    <property type="entry name" value="PLP-dependent transferases"/>
    <property type="match status" value="1"/>
</dbReference>
<dbReference type="PROSITE" id="PS00105">
    <property type="entry name" value="AA_TRANSFER_CLASS_1"/>
    <property type="match status" value="1"/>
</dbReference>
<feature type="transit peptide" description="Chloroplast" evidence="7">
    <location>
        <begin position="1"/>
        <end position="55"/>
    </location>
</feature>
<feature type="chain" id="PRO_0000401475" description="Bifunctional aspartate aminotransferase and glutamate/aspartate-prephenate aminotransferase">
    <location>
        <begin position="56"/>
        <end position="475"/>
    </location>
</feature>
<feature type="binding site" evidence="1">
    <location>
        <position position="107"/>
    </location>
    <ligand>
        <name>L-aspartate</name>
        <dbReference type="ChEBI" id="CHEBI:29991"/>
    </ligand>
</feature>
<feature type="binding site" evidence="1">
    <location>
        <position position="193"/>
    </location>
    <ligand>
        <name>L-aspartate</name>
        <dbReference type="ChEBI" id="CHEBI:29991"/>
    </ligand>
</feature>
<feature type="binding site" evidence="1">
    <location>
        <position position="243"/>
    </location>
    <ligand>
        <name>L-aspartate</name>
        <dbReference type="ChEBI" id="CHEBI:29991"/>
    </ligand>
</feature>
<feature type="binding site" evidence="1">
    <location>
        <position position="445"/>
    </location>
    <ligand>
        <name>L-aspartate</name>
        <dbReference type="ChEBI" id="CHEBI:29991"/>
    </ligand>
</feature>
<feature type="modified residue" description="N6-(pyridoxal phosphate)lysine" evidence="1">
    <location>
        <position position="306"/>
    </location>
</feature>
<feature type="splice variant" id="VSP_040191" description="In isoform 2." evidence="6">
    <location>
        <begin position="1"/>
        <end position="47"/>
    </location>
</feature>
<feature type="sequence conflict" description="In Ref. 6; BX820081." evidence="7" ref="6">
    <original>K</original>
    <variation>R</variation>
    <location>
        <position position="80"/>
    </location>
</feature>
<feature type="sequence conflict" description="In Ref. 6; BX820081." evidence="7" ref="6">
    <original>I</original>
    <variation>M</variation>
    <location>
        <position position="87"/>
    </location>
</feature>
<feature type="sequence conflict" description="In Ref. 6; BX820081." evidence="7" ref="6">
    <original>T</original>
    <variation>S</variation>
    <location>
        <position position="230"/>
    </location>
</feature>
<feature type="sequence conflict" description="In Ref. 6; BX820081." evidence="7" ref="6">
    <original>S</original>
    <variation>P</variation>
    <location>
        <position position="290"/>
    </location>
</feature>
<feature type="sequence conflict" description="In Ref. 6; BX820081." evidence="7" ref="6">
    <original>S</original>
    <variation>L</variation>
    <location>
        <position position="305"/>
    </location>
</feature>
<feature type="sequence conflict" description="In Ref. 6; BX820081." evidence="7" ref="6">
    <original>L</original>
    <variation>S</variation>
    <location>
        <position position="331"/>
    </location>
</feature>
<feature type="sequence conflict" description="In Ref. 6; BX820081." evidence="7" ref="6">
    <original>F</original>
    <variation>L</variation>
    <location>
        <position position="374"/>
    </location>
</feature>
<feature type="sequence conflict" description="In Ref. 6; BX820081." evidence="7" ref="6">
    <original>F</original>
    <variation>L</variation>
    <location>
        <position position="394"/>
    </location>
</feature>
<feature type="helix" evidence="8">
    <location>
        <begin position="74"/>
        <end position="78"/>
    </location>
</feature>
<feature type="helix" evidence="8">
    <location>
        <begin position="83"/>
        <end position="96"/>
    </location>
</feature>
<feature type="helix" evidence="8">
    <location>
        <begin position="115"/>
        <end position="126"/>
    </location>
</feature>
<feature type="helix" evidence="8">
    <location>
        <begin position="139"/>
        <end position="153"/>
    </location>
</feature>
<feature type="helix" evidence="8">
    <location>
        <begin position="159"/>
        <end position="161"/>
    </location>
</feature>
<feature type="strand" evidence="8">
    <location>
        <begin position="162"/>
        <end position="167"/>
    </location>
</feature>
<feature type="helix" evidence="8">
    <location>
        <begin position="168"/>
        <end position="179"/>
    </location>
</feature>
<feature type="strand" evidence="8">
    <location>
        <begin position="185"/>
        <end position="191"/>
    </location>
</feature>
<feature type="helix" evidence="8">
    <location>
        <begin position="196"/>
        <end position="202"/>
    </location>
</feature>
<feature type="strand" evidence="8">
    <location>
        <begin position="206"/>
        <end position="211"/>
    </location>
</feature>
<feature type="helix" evidence="8">
    <location>
        <begin position="214"/>
        <end position="216"/>
    </location>
</feature>
<feature type="helix" evidence="8">
    <location>
        <begin position="222"/>
        <end position="228"/>
    </location>
</feature>
<feature type="strand" evidence="8">
    <location>
        <begin position="233"/>
        <end position="241"/>
    </location>
</feature>
<feature type="turn" evidence="8">
    <location>
        <begin position="243"/>
        <end position="245"/>
    </location>
</feature>
<feature type="helix" evidence="8">
    <location>
        <begin position="251"/>
        <end position="262"/>
    </location>
</feature>
<feature type="strand" evidence="8">
    <location>
        <begin position="268"/>
        <end position="272"/>
    </location>
</feature>
<feature type="turn" evidence="8">
    <location>
        <begin position="274"/>
        <end position="277"/>
    </location>
</feature>
<feature type="helix" evidence="8">
    <location>
        <begin position="288"/>
        <end position="290"/>
    </location>
</feature>
<feature type="turn" evidence="8">
    <location>
        <begin position="292"/>
        <end position="294"/>
    </location>
</feature>
<feature type="helix" evidence="8">
    <location>
        <begin position="295"/>
        <end position="297"/>
    </location>
</feature>
<feature type="strand" evidence="8">
    <location>
        <begin position="298"/>
        <end position="304"/>
    </location>
</feature>
<feature type="turn" evidence="8">
    <location>
        <begin position="305"/>
        <end position="309"/>
    </location>
</feature>
<feature type="helix" evidence="8">
    <location>
        <begin position="311"/>
        <end position="313"/>
    </location>
</feature>
<feature type="strand" evidence="8">
    <location>
        <begin position="316"/>
        <end position="319"/>
    </location>
</feature>
<feature type="helix" evidence="8">
    <location>
        <begin position="322"/>
        <end position="335"/>
    </location>
</feature>
<feature type="helix" evidence="8">
    <location>
        <begin position="341"/>
        <end position="351"/>
    </location>
</feature>
<feature type="helix" evidence="8">
    <location>
        <begin position="355"/>
        <end position="357"/>
    </location>
</feature>
<feature type="helix" evidence="8">
    <location>
        <begin position="358"/>
        <end position="380"/>
    </location>
</feature>
<feature type="strand" evidence="8">
    <location>
        <begin position="391"/>
        <end position="399"/>
    </location>
</feature>
<feature type="helix" evidence="8">
    <location>
        <begin position="401"/>
        <end position="403"/>
    </location>
</feature>
<feature type="strand" evidence="8">
    <location>
        <begin position="406"/>
        <end position="408"/>
    </location>
</feature>
<feature type="turn" evidence="8">
    <location>
        <begin position="409"/>
        <end position="411"/>
    </location>
</feature>
<feature type="strand" evidence="8">
    <location>
        <begin position="412"/>
        <end position="414"/>
    </location>
</feature>
<feature type="helix" evidence="8">
    <location>
        <begin position="417"/>
        <end position="428"/>
    </location>
</feature>
<feature type="helix" evidence="8">
    <location>
        <begin position="435"/>
        <end position="438"/>
    </location>
</feature>
<feature type="strand" evidence="8">
    <location>
        <begin position="443"/>
        <end position="447"/>
    </location>
</feature>
<feature type="helix" evidence="8">
    <location>
        <begin position="452"/>
        <end position="466"/>
    </location>
</feature>
<feature type="helix" evidence="9">
    <location>
        <begin position="467"/>
        <end position="469"/>
    </location>
</feature>
<accession>Q9SIE1</accession>
<accession>E9L7A7</accession>
<accession>Q3E6N9</accession>
<accession>Q8LFX1</accession>
<accession>Q8VZI1</accession>
<sequence length="475" mass="51000">MASQSSVAVISSAAARGESFPDSKKPIGSVRFQQPLRLSFSYCKSGNMSSRICAMAKPNDAETLSSSVDMSLSPRVQSLKPSKTMVITDLAATLVQSGVPVIRLAAGEPDFDTPKVVAEAGINAIREGFTRYTLNAGITELREAICRKLKEENGLSYAPDQILVSNGAKQSLLQAVLAVCSPGDEVIIPAPYWVSYTEQARLADATPVVIPTKISNNFLLDPKDLESKLTEKSRLLILCSPSNPTGSVYPKSLLEEIARIIAKHPRLLVLSDEIYEHIIYAPATHTSFASLPDMYERTLTVNGFSKAFAMTGWRLGYLAGPKHIVAACSKLQGQVSSGASSIAQKAGVAALGLGKAGGETVAEMVKAYRERRDFLVKSLGDIKGVKISEPQGAFYLFIDFSAYYGSEAEGFGLINDSSSLALYFLDKFQVAMVPGDAFGDDSCIRISYATSLDVLQAAVEKIRKALEPLRATVSV</sequence>
<reference key="1">
    <citation type="journal article" date="2011" name="Nat. Chem. Biol.">
        <title>Prephenate aminotransferase directs plant phenylalanine biosynthesis via arogenate.</title>
        <authorList>
            <person name="Maeda H."/>
            <person name="Yoo H."/>
            <person name="Dudareva N."/>
        </authorList>
    </citation>
    <scope>NUCLEOTIDE SEQUENCE [MRNA]</scope>
    <scope>BIOPHYSICOCHEMICAL PROPERTIES</scope>
</reference>
<reference key="2">
    <citation type="journal article" date="1999" name="Nature">
        <title>Sequence and analysis of chromosome 2 of the plant Arabidopsis thaliana.</title>
        <authorList>
            <person name="Lin X."/>
            <person name="Kaul S."/>
            <person name="Rounsley S.D."/>
            <person name="Shea T.P."/>
            <person name="Benito M.-I."/>
            <person name="Town C.D."/>
            <person name="Fujii C.Y."/>
            <person name="Mason T.M."/>
            <person name="Bowman C.L."/>
            <person name="Barnstead M.E."/>
            <person name="Feldblyum T.V."/>
            <person name="Buell C.R."/>
            <person name="Ketchum K.A."/>
            <person name="Lee J.J."/>
            <person name="Ronning C.M."/>
            <person name="Koo H.L."/>
            <person name="Moffat K.S."/>
            <person name="Cronin L.A."/>
            <person name="Shen M."/>
            <person name="Pai G."/>
            <person name="Van Aken S."/>
            <person name="Umayam L."/>
            <person name="Tallon L.J."/>
            <person name="Gill J.E."/>
            <person name="Adams M.D."/>
            <person name="Carrera A.J."/>
            <person name="Creasy T.H."/>
            <person name="Goodman H.M."/>
            <person name="Somerville C.R."/>
            <person name="Copenhaver G.P."/>
            <person name="Preuss D."/>
            <person name="Nierman W.C."/>
            <person name="White O."/>
            <person name="Eisen J.A."/>
            <person name="Salzberg S.L."/>
            <person name="Fraser C.M."/>
            <person name="Venter J.C."/>
        </authorList>
    </citation>
    <scope>NUCLEOTIDE SEQUENCE [LARGE SCALE GENOMIC DNA]</scope>
    <source>
        <strain>cv. Columbia</strain>
    </source>
</reference>
<reference key="3">
    <citation type="journal article" date="2017" name="Plant J.">
        <title>Araport11: a complete reannotation of the Arabidopsis thaliana reference genome.</title>
        <authorList>
            <person name="Cheng C.Y."/>
            <person name="Krishnakumar V."/>
            <person name="Chan A.P."/>
            <person name="Thibaud-Nissen F."/>
            <person name="Schobel S."/>
            <person name="Town C.D."/>
        </authorList>
    </citation>
    <scope>GENOME REANNOTATION</scope>
    <source>
        <strain>cv. Columbia</strain>
    </source>
</reference>
<reference key="4">
    <citation type="journal article" date="2003" name="Science">
        <title>Empirical analysis of transcriptional activity in the Arabidopsis genome.</title>
        <authorList>
            <person name="Yamada K."/>
            <person name="Lim J."/>
            <person name="Dale J.M."/>
            <person name="Chen H."/>
            <person name="Shinn P."/>
            <person name="Palm C.J."/>
            <person name="Southwick A.M."/>
            <person name="Wu H.C."/>
            <person name="Kim C.J."/>
            <person name="Nguyen M."/>
            <person name="Pham P.K."/>
            <person name="Cheuk R.F."/>
            <person name="Karlin-Newmann G."/>
            <person name="Liu S.X."/>
            <person name="Lam B."/>
            <person name="Sakano H."/>
            <person name="Wu T."/>
            <person name="Yu G."/>
            <person name="Miranda M."/>
            <person name="Quach H.L."/>
            <person name="Tripp M."/>
            <person name="Chang C.H."/>
            <person name="Lee J.M."/>
            <person name="Toriumi M.J."/>
            <person name="Chan M.M."/>
            <person name="Tang C.C."/>
            <person name="Onodera C.S."/>
            <person name="Deng J.M."/>
            <person name="Akiyama K."/>
            <person name="Ansari Y."/>
            <person name="Arakawa T."/>
            <person name="Banh J."/>
            <person name="Banno F."/>
            <person name="Bowser L."/>
            <person name="Brooks S.Y."/>
            <person name="Carninci P."/>
            <person name="Chao Q."/>
            <person name="Choy N."/>
            <person name="Enju A."/>
            <person name="Goldsmith A.D."/>
            <person name="Gurjal M."/>
            <person name="Hansen N.F."/>
            <person name="Hayashizaki Y."/>
            <person name="Johnson-Hopson C."/>
            <person name="Hsuan V.W."/>
            <person name="Iida K."/>
            <person name="Karnes M."/>
            <person name="Khan S."/>
            <person name="Koesema E."/>
            <person name="Ishida J."/>
            <person name="Jiang P.X."/>
            <person name="Jones T."/>
            <person name="Kawai J."/>
            <person name="Kamiya A."/>
            <person name="Meyers C."/>
            <person name="Nakajima M."/>
            <person name="Narusaka M."/>
            <person name="Seki M."/>
            <person name="Sakurai T."/>
            <person name="Satou M."/>
            <person name="Tamse R."/>
            <person name="Vaysberg M."/>
            <person name="Wallender E.K."/>
            <person name="Wong C."/>
            <person name="Yamamura Y."/>
            <person name="Yuan S."/>
            <person name="Shinozaki K."/>
            <person name="Davis R.W."/>
            <person name="Theologis A."/>
            <person name="Ecker J.R."/>
        </authorList>
    </citation>
    <scope>NUCLEOTIDE SEQUENCE [LARGE SCALE MRNA]</scope>
    <source>
        <strain>cv. Columbia</strain>
    </source>
</reference>
<reference key="5">
    <citation type="submission" date="2002-03" db="EMBL/GenBank/DDBJ databases">
        <title>Full-length cDNA from Arabidopsis thaliana.</title>
        <authorList>
            <person name="Brover V.V."/>
            <person name="Troukhan M.E."/>
            <person name="Alexandrov N.A."/>
            <person name="Lu Y.-P."/>
            <person name="Flavell R.B."/>
            <person name="Feldmann K.A."/>
        </authorList>
    </citation>
    <scope>NUCLEOTIDE SEQUENCE [LARGE SCALE MRNA]</scope>
</reference>
<reference key="6">
    <citation type="journal article" date="2004" name="Genome Res.">
        <title>Whole genome sequence comparisons and 'full-length' cDNA sequences: a combined approach to evaluate and improve Arabidopsis genome annotation.</title>
        <authorList>
            <person name="Castelli V."/>
            <person name="Aury J.-M."/>
            <person name="Jaillon O."/>
            <person name="Wincker P."/>
            <person name="Clepet C."/>
            <person name="Menard M."/>
            <person name="Cruaud C."/>
            <person name="Quetier F."/>
            <person name="Scarpelli C."/>
            <person name="Schaechter V."/>
            <person name="Temple G."/>
            <person name="Caboche M."/>
            <person name="Weissenbach J."/>
            <person name="Salanoubat M."/>
        </authorList>
    </citation>
    <scope>NUCLEOTIDE SEQUENCE [LARGE SCALE MRNA] (ISOFORM 2)</scope>
    <source>
        <strain>cv. Columbia</strain>
    </source>
</reference>
<reference key="7">
    <citation type="journal article" date="2005" name="Development">
        <title>Genetic and molecular identification of genes required for female gametophyte development and function in Arabidopsis.</title>
        <authorList>
            <person name="Pagnussat G.C."/>
            <person name="Yu H.-J."/>
            <person name="Ngo Q.A."/>
            <person name="Rajani S."/>
            <person name="Mayalagu S."/>
            <person name="Johnson C.S."/>
            <person name="Capron A."/>
            <person name="Xie L.-F."/>
            <person name="Ye D."/>
            <person name="Sundaresan V."/>
        </authorList>
    </citation>
    <scope>FUNCTION</scope>
</reference>
<reference key="8">
    <citation type="journal article" date="2006" name="Plant J.">
        <title>Identification and functional analysis of a prokaryotic-type aspartate aminotransferase: implications for plant amino acid metabolism.</title>
        <authorList>
            <person name="de la Torre F."/>
            <person name="De Santis L."/>
            <person name="Suarez M.F."/>
            <person name="Crespillo R."/>
            <person name="Canovas F.M."/>
        </authorList>
    </citation>
    <scope>FUNCTION</scope>
    <scope>SUBCELLULAR LOCATION</scope>
</reference>
<reference key="9">
    <citation type="journal article" date="2010" name="FEBS Lett.">
        <title>Identification of a plant gene encoding glutamate/aspartate-prephenate aminotransferase: The last homeless enzyme of aromatic amino acids biosynthesis.</title>
        <authorList>
            <person name="Graindorge M."/>
            <person name="Giustini C."/>
            <person name="Jacomin A.C."/>
            <person name="Kraut A."/>
            <person name="Curien G."/>
            <person name="Matringe M."/>
        </authorList>
    </citation>
    <scope>IDENTIFICATION BY MASS SPECTROMETRY</scope>
    <scope>FUNCTION</scope>
    <scope>CATALYTIC ACTIVITY</scope>
    <scope>BIOPHYSICOCHEMICAL PROPERTIES</scope>
</reference>
<organism>
    <name type="scientific">Arabidopsis thaliana</name>
    <name type="common">Mouse-ear cress</name>
    <dbReference type="NCBI Taxonomy" id="3702"/>
    <lineage>
        <taxon>Eukaryota</taxon>
        <taxon>Viridiplantae</taxon>
        <taxon>Streptophyta</taxon>
        <taxon>Embryophyta</taxon>
        <taxon>Tracheophyta</taxon>
        <taxon>Spermatophyta</taxon>
        <taxon>Magnoliopsida</taxon>
        <taxon>eudicotyledons</taxon>
        <taxon>Gunneridae</taxon>
        <taxon>Pentapetalae</taxon>
        <taxon>rosids</taxon>
        <taxon>malvids</taxon>
        <taxon>Brassicales</taxon>
        <taxon>Brassicaceae</taxon>
        <taxon>Camelineae</taxon>
        <taxon>Arabidopsis</taxon>
    </lineage>
</organism>
<protein>
    <recommendedName>
        <fullName>Bifunctional aspartate aminotransferase and glutamate/aspartate-prephenate aminotransferase</fullName>
        <shortName>AtAAT</shortName>
        <shortName>AtPPA-AT</shortName>
        <ecNumber>2.6.1.1</ecNumber>
        <ecNumber>2.6.1.78</ecNumber>
        <ecNumber>2.6.1.79</ecNumber>
    </recommendedName>
    <alternativeName>
        <fullName>Protein MATERNAL EFFECT EMBRYO ARREST 17</fullName>
    </alternativeName>
</protein>
<name>PAT_ARATH</name>
<evidence type="ECO:0000250" key="1"/>
<evidence type="ECO:0000269" key="2">
    <source>
    </source>
</evidence>
<evidence type="ECO:0000269" key="3">
    <source>
    </source>
</evidence>
<evidence type="ECO:0000269" key="4">
    <source>
    </source>
</evidence>
<evidence type="ECO:0000269" key="5">
    <source>
    </source>
</evidence>
<evidence type="ECO:0000303" key="6">
    <source>
    </source>
</evidence>
<evidence type="ECO:0000305" key="7"/>
<evidence type="ECO:0007829" key="8">
    <source>
        <dbReference type="PDB" id="5WMK"/>
    </source>
</evidence>
<evidence type="ECO:0007829" key="9">
    <source>
        <dbReference type="PDB" id="6F5V"/>
    </source>
</evidence>
<keyword id="KW-0002">3D-structure</keyword>
<keyword id="KW-0025">Alternative splicing</keyword>
<keyword id="KW-0028">Amino-acid biosynthesis</keyword>
<keyword id="KW-0032">Aminotransferase</keyword>
<keyword id="KW-0150">Chloroplast</keyword>
<keyword id="KW-0934">Plastid</keyword>
<keyword id="KW-0663">Pyridoxal phosphate</keyword>
<keyword id="KW-1185">Reference proteome</keyword>
<keyword id="KW-0808">Transferase</keyword>
<keyword id="KW-0809">Transit peptide</keyword>
<comment type="function">
    <text evidence="2 3 4">Prokaryotic-type aspartate aminotransferase. Also has a prenate transaminase activity. Involved in the aromatic amino acids biosynthesis pathway via the arogenate route. Required for the transamination of prephenate into arogenate. Required for early development of the embryo.</text>
</comment>
<comment type="catalytic activity">
    <reaction evidence="4">
        <text>L-aspartate + 2-oxoglutarate = oxaloacetate + L-glutamate</text>
        <dbReference type="Rhea" id="RHEA:21824"/>
        <dbReference type="ChEBI" id="CHEBI:16452"/>
        <dbReference type="ChEBI" id="CHEBI:16810"/>
        <dbReference type="ChEBI" id="CHEBI:29985"/>
        <dbReference type="ChEBI" id="CHEBI:29991"/>
        <dbReference type="EC" id="2.6.1.1"/>
    </reaction>
</comment>
<comment type="catalytic activity">
    <reaction evidence="4">
        <text>L-arogenate + oxaloacetate = prephenate + L-aspartate</text>
        <dbReference type="Rhea" id="RHEA:20445"/>
        <dbReference type="ChEBI" id="CHEBI:16452"/>
        <dbReference type="ChEBI" id="CHEBI:29934"/>
        <dbReference type="ChEBI" id="CHEBI:29991"/>
        <dbReference type="ChEBI" id="CHEBI:58180"/>
        <dbReference type="EC" id="2.6.1.78"/>
    </reaction>
</comment>
<comment type="catalytic activity">
    <reaction evidence="4">
        <text>L-arogenate + 2-oxoglutarate = prephenate + L-glutamate</text>
        <dbReference type="Rhea" id="RHEA:22880"/>
        <dbReference type="ChEBI" id="CHEBI:16810"/>
        <dbReference type="ChEBI" id="CHEBI:29934"/>
        <dbReference type="ChEBI" id="CHEBI:29985"/>
        <dbReference type="ChEBI" id="CHEBI:58180"/>
        <dbReference type="EC" id="2.6.1.79"/>
    </reaction>
</comment>
<comment type="cofactor">
    <cofactor evidence="1">
        <name>pyridoxal 5'-phosphate</name>
        <dbReference type="ChEBI" id="CHEBI:597326"/>
    </cofactor>
</comment>
<comment type="biophysicochemical properties">
    <kinetics>
        <KM evidence="4 5">12 mM for aspartate for the asparte aminotransferase activity</KM>
        <KM evidence="4 5">5.6 mM for glutamate for the asparte aminotransferase activity</KM>
        <KM evidence="4 5">25 uM for oxaloacetate for the asparte aminotransferase activity</KM>
        <KM evidence="4 5">200 uM for 2-oxoglutarate for the asparte aminotransferase activity</KM>
        <KM evidence="4 5">14 uM for prephenate for the prephenate aminotransferase activity</KM>
        <KM evidence="4 5">1.5 mM for glutamate for the prephenate aminotransferase activity</KM>
        <KM evidence="4 5">2.2 mM for aspartate for the prephenate aminotransferase activity</KM>
        <KM evidence="4 5">355 uM for prephenate (for the recombinant enzyme with 20 mM aspartate as cosubstrate)</KM>
        <KM evidence="4 5">684 uM for prephenate (for the recombinant enzyme with 20 mM glutamate as cosubstrate)</KM>
        <KM evidence="4 5">691 uM for 2-oxoglutarate (for the recombinant enzyme with 20 mM aspartate as cosubstrate)</KM>
        <KM evidence="4 5">2.69 mM for glutamate (for the recombinant enzyme with 3 mM prephenate as cosubstrate)</KM>
        <KM evidence="4 5">2.84 mM for aspartate (for the recombinant enzyme with 3 mM prephenate as cosubstrate)</KM>
        <KM evidence="4 5">8.22 mM for oxaloacetate (for the recombinant enzyme with 20 mM glutamate as cosubstrate)</KM>
        <Vmax evidence="4 5">88.0 nmol/sec/mg enzyme toward prephenate with 20 mM aspartate as cosubstrate</Vmax>
        <Vmax evidence="4 5">173.0 nmol/sec/mg enzyme toward prephenate with 20 mM glutamate as cosubstrate</Vmax>
        <Vmax evidence="4 5">325.0 nmol/sec/mg enzyme toward 2-oxoglutarate with 20 mM aspartate as cosubstrate</Vmax>
        <Vmax evidence="4 5">90.0 nmol/sec/mg enzyme toward glutamate with 3 mM prephenate as cosubstrate</Vmax>
        <Vmax evidence="4 5">70.0 nmol/sec/mg enzyme toward aspartate with 3 mM prephenate as cosubstrate</Vmax>
        <Vmax evidence="4 5">3.29 umol/sec/mg enzyme toward oxaloacetate with 20 mM glutamate as cosubstrate</Vmax>
    </kinetics>
</comment>
<comment type="pathway">
    <text>Amino-acid biosynthesis; L-phenylalanine biosynthesis; L-arogenate from prephenate (L-Asp route): step 1/1.</text>
</comment>
<comment type="pathway">
    <text>Amino-acid biosynthesis; L-phenylalanine biosynthesis; L-arogenate from prephenate (L-Glu route): step 1/1.</text>
</comment>
<comment type="subunit">
    <text evidence="1">Homodimer.</text>
</comment>
<comment type="subcellular location">
    <subcellularLocation>
        <location evidence="3">Plastid</location>
        <location evidence="3">Chloroplast</location>
    </subcellularLocation>
</comment>
<comment type="alternative products">
    <event type="alternative splicing"/>
    <isoform>
        <id>Q9SIE1-1</id>
        <name>1</name>
        <sequence type="displayed"/>
    </isoform>
    <isoform>
        <id>Q9SIE1-2</id>
        <name>2</name>
        <sequence type="described" ref="VSP_040191"/>
    </isoform>
</comment>
<comment type="similarity">
    <text evidence="7">Belongs to the class-I pyridoxal-phosphate-dependent aminotransferase family.</text>
</comment>